<sequence>MEQIITEFISRFGYAAIFILILLENVLPIVPSEIILTFAGLMSVKSHLSILTLFIIATIASFIGLLILYYICRLISEERLYRFIDRHGKWIKLKSKDLKRANDWFKKYGVWAVFICRFIPVLRVLITIPAGVNRMNVVTFTVISLIGTTIWNFGLILLGRTLSDSFGMLMTGLHTYSRIMYVVIIIAVIYFAIRYIGKRKRVK</sequence>
<protein>
    <recommendedName>
        <fullName evidence="4">Undecaprenyl phosphate transporter A</fullName>
        <shortName evidence="4">UndP transporter A</shortName>
    </recommendedName>
    <alternativeName>
        <fullName evidence="4">Polyprenyl-phosphate transporter</fullName>
    </alternativeName>
</protein>
<feature type="chain" id="PRO_0000458060" description="Undecaprenyl phosphate transporter A">
    <location>
        <begin position="1"/>
        <end position="203"/>
    </location>
</feature>
<feature type="transmembrane region" description="Helical" evidence="1">
    <location>
        <begin position="16"/>
        <end position="36"/>
    </location>
</feature>
<feature type="transmembrane region" description="Helical" evidence="1">
    <location>
        <begin position="48"/>
        <end position="68"/>
    </location>
</feature>
<feature type="transmembrane region" description="Helical" evidence="1">
    <location>
        <begin position="108"/>
        <end position="128"/>
    </location>
</feature>
<feature type="transmembrane region" description="Helical" evidence="1">
    <location>
        <begin position="137"/>
        <end position="157"/>
    </location>
</feature>
<feature type="transmembrane region" description="Helical" evidence="1">
    <location>
        <begin position="173"/>
        <end position="193"/>
    </location>
</feature>
<organism>
    <name type="scientific">Staphylococcus aureus (strain NCTC 8325 / PS 47)</name>
    <dbReference type="NCBI Taxonomy" id="93061"/>
    <lineage>
        <taxon>Bacteria</taxon>
        <taxon>Bacillati</taxon>
        <taxon>Bacillota</taxon>
        <taxon>Bacilli</taxon>
        <taxon>Bacillales</taxon>
        <taxon>Staphylococcaceae</taxon>
        <taxon>Staphylococcus</taxon>
    </lineage>
</organism>
<proteinExistence type="inferred from homology"/>
<reference key="1">
    <citation type="book" date="2006" name="Gram positive pathogens, 2nd edition">
        <title>The Staphylococcus aureus NCTC 8325 genome.</title>
        <editorList>
            <person name="Fischetti V."/>
            <person name="Novick R."/>
            <person name="Ferretti J."/>
            <person name="Portnoy D."/>
            <person name="Rood J."/>
        </editorList>
        <authorList>
            <person name="Gillaspy A.F."/>
            <person name="Worrell V."/>
            <person name="Orvis J."/>
            <person name="Roe B.A."/>
            <person name="Dyer D.W."/>
            <person name="Iandolo J.J."/>
        </authorList>
    </citation>
    <scope>NUCLEOTIDE SEQUENCE [LARGE SCALE GENOMIC DNA]</scope>
    <source>
        <strain>NCTC 8325 / PS 47</strain>
    </source>
</reference>
<reference key="2">
    <citation type="journal article" date="2023" name="Nature">
        <title>Undecaprenyl phosphate translocases confer conditional microbial fitness.</title>
        <authorList>
            <person name="Sit B."/>
            <person name="Srisuknimit V."/>
            <person name="Bueno E."/>
            <person name="Zingl F.G."/>
            <person name="Hullahalli K."/>
            <person name="Cava F."/>
            <person name="Waldor M.K."/>
        </authorList>
    </citation>
    <scope>FUNCTION</scope>
    <scope>DISRUPTION PHENOTYPE</scope>
    <source>
        <strain>NCTC 8325 / PS 47</strain>
    </source>
</reference>
<reference key="3">
    <citation type="journal article" date="2023" name="Nature">
        <title>Two broadly conserved families of polyprenyl-phosphate transporters.</title>
        <authorList>
            <person name="Roney I.J."/>
            <person name="Rudner D.Z."/>
        </authorList>
    </citation>
    <scope>FUNCTION</scope>
    <scope>DISRUPTION PHENOTYPE</scope>
    <source>
        <strain>RN4220</strain>
    </source>
</reference>
<keyword id="KW-1003">Cell membrane</keyword>
<keyword id="KW-0961">Cell wall biogenesis/degradation</keyword>
<keyword id="KW-0472">Membrane</keyword>
<keyword id="KW-1185">Reference proteome</keyword>
<keyword id="KW-0812">Transmembrane</keyword>
<keyword id="KW-1133">Transmembrane helix</keyword>
<keyword id="KW-0813">Transport</keyword>
<comment type="function">
    <text evidence="2 3">Flippase that catalyzes the transport of undecaprenyl phosphate (UndP) across the cytoplasmic membrane, from the external side to the cytoplasmic side (PubMed:36450355, PubMed:36450357). Is involved in UndP recycling during peptidoglycan synthesis (PubMed:36450357).</text>
</comment>
<comment type="subcellular location">
    <subcellularLocation>
        <location evidence="6">Cell membrane</location>
        <topology evidence="1">Multi-pass membrane protein</topology>
    </subcellularLocation>
</comment>
<comment type="disruption phenotype">
    <text evidence="2 3">Deletion of the gene does not affect sensitivity to the amphomycin derivative MX2401, which binds UndP in the outer leaflet of the cytoplasmic membrane and prevents its recycling (PubMed:36450357). In another study, the deletion mutant exhibits moderate acid-dependent amphomycin sensitivity, but sensitivity to other antibiotics is unaltered at any pH (PubMed:36450355). The double mutant uptA-popT is growth-impaired and exhibits cell size variability, and 10% of the cells have membrane permeability defects, consistent with impaired envelope assembly (PubMed:36450357). The triple mutant lacking uptA, popT and SAOUHSC_00901 is not viable (PubMed:36450357).</text>
</comment>
<comment type="similarity">
    <text evidence="5">Belongs to the DedA family.</text>
</comment>
<name>UPTA_STAA8</name>
<accession>Q2FVB8</accession>
<evidence type="ECO:0000255" key="1"/>
<evidence type="ECO:0000269" key="2">
    <source>
    </source>
</evidence>
<evidence type="ECO:0000269" key="3">
    <source>
    </source>
</evidence>
<evidence type="ECO:0000303" key="4">
    <source>
    </source>
</evidence>
<evidence type="ECO:0000305" key="5"/>
<evidence type="ECO:0000305" key="6">
    <source>
    </source>
</evidence>
<evidence type="ECO:0000312" key="7">
    <source>
        <dbReference type="EMBL" id="ABD31818.1"/>
    </source>
</evidence>
<dbReference type="EMBL" id="CP000253">
    <property type="protein sequence ID" value="ABD31818.1"/>
    <property type="molecule type" value="Genomic_DNA"/>
</dbReference>
<dbReference type="RefSeq" id="WP_000435044.1">
    <property type="nucleotide sequence ID" value="NZ_LS483365.1"/>
</dbReference>
<dbReference type="RefSeq" id="YP_501274.1">
    <property type="nucleotide sequence ID" value="NC_007795.1"/>
</dbReference>
<dbReference type="STRING" id="93061.SAOUHSC_02816"/>
<dbReference type="PaxDb" id="1280-SAXN108_2760"/>
<dbReference type="GeneID" id="3921255"/>
<dbReference type="KEGG" id="sao:SAOUHSC_02816"/>
<dbReference type="PATRIC" id="fig|93061.5.peg.2547"/>
<dbReference type="eggNOG" id="COG0586">
    <property type="taxonomic scope" value="Bacteria"/>
</dbReference>
<dbReference type="HOGENOM" id="CLU_044208_1_1_9"/>
<dbReference type="OrthoDB" id="9813426at2"/>
<dbReference type="Proteomes" id="UP000008816">
    <property type="component" value="Chromosome"/>
</dbReference>
<dbReference type="GO" id="GO:0005886">
    <property type="term" value="C:plasma membrane"/>
    <property type="evidence" value="ECO:0000318"/>
    <property type="project" value="GO_Central"/>
</dbReference>
<dbReference type="GO" id="GO:0071555">
    <property type="term" value="P:cell wall organization"/>
    <property type="evidence" value="ECO:0007669"/>
    <property type="project" value="UniProtKB-KW"/>
</dbReference>
<dbReference type="InterPro" id="IPR051311">
    <property type="entry name" value="DedA_domain"/>
</dbReference>
<dbReference type="InterPro" id="IPR032816">
    <property type="entry name" value="VTT_dom"/>
</dbReference>
<dbReference type="PANTHER" id="PTHR42709">
    <property type="entry name" value="ALKALINE PHOSPHATASE LIKE PROTEIN"/>
    <property type="match status" value="1"/>
</dbReference>
<dbReference type="PANTHER" id="PTHR42709:SF6">
    <property type="entry name" value="UNDECAPRENYL PHOSPHATE TRANSPORTER A"/>
    <property type="match status" value="1"/>
</dbReference>
<dbReference type="Pfam" id="PF09335">
    <property type="entry name" value="VTT_dom"/>
    <property type="match status" value="1"/>
</dbReference>
<gene>
    <name evidence="4" type="primary">uptA</name>
    <name evidence="7" type="ordered locus">SAOUHSC_02816</name>
</gene>